<keyword id="KW-0004">4Fe-4S</keyword>
<keyword id="KW-0350">Heme biosynthesis</keyword>
<keyword id="KW-0408">Iron</keyword>
<keyword id="KW-0411">Iron-sulfur</keyword>
<keyword id="KW-0456">Lyase</keyword>
<keyword id="KW-0479">Metal-binding</keyword>
<keyword id="KW-0949">S-adenosyl-L-methionine</keyword>
<name>AHBC_METBF</name>
<evidence type="ECO:0000255" key="1">
    <source>
        <dbReference type="PROSITE-ProRule" id="PRU01266"/>
    </source>
</evidence>
<evidence type="ECO:0000269" key="2">
    <source>
    </source>
</evidence>
<evidence type="ECO:0000269" key="3">
    <source>
    </source>
</evidence>
<evidence type="ECO:0000303" key="4">
    <source>
    </source>
</evidence>
<evidence type="ECO:0000305" key="5"/>
<evidence type="ECO:0000312" key="6">
    <source>
        <dbReference type="EMBL" id="AAZ70734.1"/>
    </source>
</evidence>
<comment type="function">
    <text evidence="2 3">Involved in siroheme-dependent heme b biosynthesis. Catalyzes the conversion of didecarboxysiroheme into Fe-coproporphyrin III by oxidative loss of two acetic acid side chains.</text>
</comment>
<comment type="catalytic activity">
    <reaction evidence="2 3">
        <text>12,18-didecarboxysiroheme + 2 AH2 + 2 S-adenosyl-L-methionine = Fe-coproporphyrin III + 2 5'-deoxyadenosine + 2 L-methionine + 2 acetate + 2 A + 2 H(+)</text>
        <dbReference type="Rhea" id="RHEA:37431"/>
        <dbReference type="ChEBI" id="CHEBI:13193"/>
        <dbReference type="ChEBI" id="CHEBI:15378"/>
        <dbReference type="ChEBI" id="CHEBI:17319"/>
        <dbReference type="ChEBI" id="CHEBI:17499"/>
        <dbReference type="ChEBI" id="CHEBI:30089"/>
        <dbReference type="ChEBI" id="CHEBI:57844"/>
        <dbReference type="ChEBI" id="CHEBI:59789"/>
        <dbReference type="ChEBI" id="CHEBI:68438"/>
        <dbReference type="ChEBI" id="CHEBI:140497"/>
    </reaction>
</comment>
<comment type="cofactor">
    <cofactor evidence="1">
        <name>[4Fe-4S] cluster</name>
        <dbReference type="ChEBI" id="CHEBI:49883"/>
    </cofactor>
</comment>
<comment type="pathway">
    <text evidence="3">Porphyrin-containing compound metabolism; protoheme biosynthesis.</text>
</comment>
<comment type="similarity">
    <text evidence="5">Belongs to the radical SAM superfamily.</text>
</comment>
<gene>
    <name evidence="4" type="primary">ahbC</name>
    <name evidence="6" type="ordered locus">Mbar_A1793</name>
</gene>
<proteinExistence type="evidence at protein level"/>
<dbReference type="EC" id="4.1.3.-" evidence="2 3"/>
<dbReference type="EMBL" id="CP000099">
    <property type="protein sequence ID" value="AAZ70734.1"/>
    <property type="molecule type" value="Genomic_DNA"/>
</dbReference>
<dbReference type="SMR" id="Q46BK8"/>
<dbReference type="STRING" id="269797.Mbar_A1793"/>
<dbReference type="PaxDb" id="269797-Mbar_A1793"/>
<dbReference type="KEGG" id="mba:Mbar_A1793"/>
<dbReference type="eggNOG" id="arCOG00938">
    <property type="taxonomic scope" value="Archaea"/>
</dbReference>
<dbReference type="HOGENOM" id="CLU_009273_4_0_2"/>
<dbReference type="OrthoDB" id="30736at2157"/>
<dbReference type="BioCyc" id="MetaCyc:MONOMER-18866"/>
<dbReference type="UniPathway" id="UPA00252"/>
<dbReference type="GO" id="GO:0051539">
    <property type="term" value="F:4 iron, 4 sulfur cluster binding"/>
    <property type="evidence" value="ECO:0007669"/>
    <property type="project" value="UniProtKB-KW"/>
</dbReference>
<dbReference type="GO" id="GO:0016829">
    <property type="term" value="F:lyase activity"/>
    <property type="evidence" value="ECO:0007669"/>
    <property type="project" value="UniProtKB-KW"/>
</dbReference>
<dbReference type="GO" id="GO:0046872">
    <property type="term" value="F:metal ion binding"/>
    <property type="evidence" value="ECO:0007669"/>
    <property type="project" value="UniProtKB-KW"/>
</dbReference>
<dbReference type="GO" id="GO:0006783">
    <property type="term" value="P:heme biosynthetic process"/>
    <property type="evidence" value="ECO:0007669"/>
    <property type="project" value="UniProtKB-KW"/>
</dbReference>
<dbReference type="CDD" id="cd01335">
    <property type="entry name" value="Radical_SAM"/>
    <property type="match status" value="1"/>
</dbReference>
<dbReference type="CDD" id="cd21123">
    <property type="entry name" value="SPASM_MftC-like"/>
    <property type="match status" value="1"/>
</dbReference>
<dbReference type="FunFam" id="3.20.20.70:FF:000188">
    <property type="entry name" value="Mycofactocin radical SAM maturase MftC"/>
    <property type="match status" value="1"/>
</dbReference>
<dbReference type="Gene3D" id="3.20.20.70">
    <property type="entry name" value="Aldolase class I"/>
    <property type="match status" value="1"/>
</dbReference>
<dbReference type="InterPro" id="IPR023885">
    <property type="entry name" value="4Fe4S-binding_SPASM_dom"/>
</dbReference>
<dbReference type="InterPro" id="IPR030894">
    <property type="entry name" value="Ahb_Proteobacteria"/>
</dbReference>
<dbReference type="InterPro" id="IPR034479">
    <property type="entry name" value="AhbC-like"/>
</dbReference>
<dbReference type="InterPro" id="IPR013785">
    <property type="entry name" value="Aldolase_TIM"/>
</dbReference>
<dbReference type="InterPro" id="IPR006638">
    <property type="entry name" value="Elp3/MiaA/NifB-like_rSAM"/>
</dbReference>
<dbReference type="InterPro" id="IPR017200">
    <property type="entry name" value="PqqE-like"/>
</dbReference>
<dbReference type="InterPro" id="IPR050377">
    <property type="entry name" value="Radical_SAM_PqqE_MftC-like"/>
</dbReference>
<dbReference type="InterPro" id="IPR007197">
    <property type="entry name" value="rSAM"/>
</dbReference>
<dbReference type="NCBIfam" id="TIGR04546">
    <property type="entry name" value="rSAM_ahbC_deAc"/>
    <property type="match status" value="1"/>
</dbReference>
<dbReference type="NCBIfam" id="TIGR04085">
    <property type="entry name" value="rSAM_more_4Fe4S"/>
    <property type="match status" value="1"/>
</dbReference>
<dbReference type="PANTHER" id="PTHR11228:SF7">
    <property type="entry name" value="PQQA PEPTIDE CYCLASE"/>
    <property type="match status" value="1"/>
</dbReference>
<dbReference type="PANTHER" id="PTHR11228">
    <property type="entry name" value="RADICAL SAM DOMAIN PROTEIN"/>
    <property type="match status" value="1"/>
</dbReference>
<dbReference type="Pfam" id="PF13353">
    <property type="entry name" value="Fer4_12"/>
    <property type="match status" value="1"/>
</dbReference>
<dbReference type="Pfam" id="PF04055">
    <property type="entry name" value="Radical_SAM"/>
    <property type="match status" value="1"/>
</dbReference>
<dbReference type="Pfam" id="PF13186">
    <property type="entry name" value="SPASM"/>
    <property type="match status" value="1"/>
</dbReference>
<dbReference type="PIRSF" id="PIRSF037420">
    <property type="entry name" value="PQQ_syn_pqqE"/>
    <property type="match status" value="1"/>
</dbReference>
<dbReference type="SFLD" id="SFLDF00543">
    <property type="entry name" value="alternative_heme_biosynthesis"/>
    <property type="match status" value="1"/>
</dbReference>
<dbReference type="SFLD" id="SFLDG01072">
    <property type="entry name" value="dehydrogenase_like"/>
    <property type="match status" value="1"/>
</dbReference>
<dbReference type="SMART" id="SM00729">
    <property type="entry name" value="Elp3"/>
    <property type="match status" value="1"/>
</dbReference>
<dbReference type="SUPFAM" id="SSF102114">
    <property type="entry name" value="Radical SAM enzymes"/>
    <property type="match status" value="1"/>
</dbReference>
<dbReference type="PROSITE" id="PS51918">
    <property type="entry name" value="RADICAL_SAM"/>
    <property type="match status" value="1"/>
</dbReference>
<accession>Q46BK8</accession>
<sequence length="399" mass="45108">MIGISKLYCGTVEPSDALRYGRDSKKLPSHLLQFSKDKKPVVVWNMTRRCNLKCVHCYAQAKDIEFENELSTEEGKALIDDLASFGSPVILFSGGEPTMRKDLPELAAYAREKGMRAVISTNGTLIDREMAKKLKEVGLSYVGVSLDGIRETNDKFRGMKGAFDAALRGLHNCQEEGIKVGLRFTINKQNVRDIPAIFDLLEEEKIPRICFYHLVYAGRGSKMVNEDLSLEESRQAVDLILERTRKLHEKGFPAEVLTVDNHCDGPYLYMKLLKENPERAAEVFELLSMNQGNSSGIGIGCVSWDGAVHADQFWRHYSFGNVRERPFSEIWTDLSDELMAGLKNRKPLIKAHADRCARCKWLDVCNGNFRVRAEAVYGNVWADDPACYLTKEEIGYYEA</sequence>
<organism>
    <name type="scientific">Methanosarcina barkeri (strain Fusaro / DSM 804)</name>
    <dbReference type="NCBI Taxonomy" id="269797"/>
    <lineage>
        <taxon>Archaea</taxon>
        <taxon>Methanobacteriati</taxon>
        <taxon>Methanobacteriota</taxon>
        <taxon>Stenosarchaea group</taxon>
        <taxon>Methanomicrobia</taxon>
        <taxon>Methanosarcinales</taxon>
        <taxon>Methanosarcinaceae</taxon>
        <taxon>Methanosarcina</taxon>
    </lineage>
</organism>
<reference key="1">
    <citation type="journal article" date="2006" name="J. Bacteriol.">
        <title>The Methanosarcina barkeri genome: comparative analysis with Methanosarcina acetivorans and Methanosarcina mazei reveals extensive rearrangement within methanosarcinal genomes.</title>
        <authorList>
            <person name="Maeder D.L."/>
            <person name="Anderson I."/>
            <person name="Brettin T.S."/>
            <person name="Bruce D.C."/>
            <person name="Gilna P."/>
            <person name="Han C.S."/>
            <person name="Lapidus A."/>
            <person name="Metcalf W.W."/>
            <person name="Saunders E."/>
            <person name="Tapia R."/>
            <person name="Sowers K.R."/>
        </authorList>
    </citation>
    <scope>NUCLEOTIDE SEQUENCE [LARGE SCALE GENOMIC DNA]</scope>
    <source>
        <strain>Fusaro / DSM 804</strain>
    </source>
</reference>
<reference key="2">
    <citation type="journal article" date="2011" name="Proc. Natl. Acad. Sci. U.S.A.">
        <title>Molecular hijacking of siroheme for the synthesis of heme and d1 heme.</title>
        <authorList>
            <person name="Bali S."/>
            <person name="Lawrence A.D."/>
            <person name="Lobo S.A."/>
            <person name="Saraiva L.M."/>
            <person name="Golding B.T."/>
            <person name="Palmer D.J."/>
            <person name="Howard M.J."/>
            <person name="Ferguson S.J."/>
            <person name="Warren M.J."/>
        </authorList>
    </citation>
    <scope>FUNCTION</scope>
    <scope>CATALYTIC ACTIVITY</scope>
</reference>
<reference key="3">
    <citation type="journal article" date="2014" name="Archaea">
        <title>The alternative route to heme in the methanogenic archaeon Methanosarcina barkeri.</title>
        <authorList>
            <person name="Kuehner M."/>
            <person name="Haufschildt K."/>
            <person name="Neumann A."/>
            <person name="Storbeck S."/>
            <person name="Streif J."/>
            <person name="Layer G."/>
        </authorList>
    </citation>
    <scope>FUNCTION</scope>
    <scope>CATALYTIC ACTIVITY</scope>
    <scope>PATHWAY</scope>
</reference>
<feature type="chain" id="PRO_0000450510" description="Fe-coproporphyrin III synthase">
    <location>
        <begin position="1"/>
        <end position="399"/>
    </location>
</feature>
<feature type="domain" description="Radical SAM core" evidence="1">
    <location>
        <begin position="36"/>
        <end position="253"/>
    </location>
</feature>
<feature type="binding site" evidence="1">
    <location>
        <position position="50"/>
    </location>
    <ligand>
        <name>[4Fe-4S] cluster</name>
        <dbReference type="ChEBI" id="CHEBI:49883"/>
        <note>4Fe-4S-S-AdoMet</note>
    </ligand>
</feature>
<feature type="binding site" evidence="1">
    <location>
        <position position="54"/>
    </location>
    <ligand>
        <name>[4Fe-4S] cluster</name>
        <dbReference type="ChEBI" id="CHEBI:49883"/>
        <note>4Fe-4S-S-AdoMet</note>
    </ligand>
</feature>
<feature type="binding site" evidence="1">
    <location>
        <position position="57"/>
    </location>
    <ligand>
        <name>[4Fe-4S] cluster</name>
        <dbReference type="ChEBI" id="CHEBI:49883"/>
        <note>4Fe-4S-S-AdoMet</note>
    </ligand>
</feature>
<protein>
    <recommendedName>
        <fullName evidence="5">Fe-coproporphyrin III synthase</fullName>
        <ecNumber evidence="2 3">4.1.3.-</ecNumber>
    </recommendedName>
</protein>